<accession>P34596</accession>
<protein>
    <recommendedName>
        <fullName>Uncharacterized protein ZC262.4</fullName>
    </recommendedName>
</protein>
<proteinExistence type="predicted"/>
<gene>
    <name type="ORF">ZC262.4</name>
</gene>
<dbReference type="EMBL" id="FO081113">
    <property type="protein sequence ID" value="CCD69196.1"/>
    <property type="molecule type" value="Genomic_DNA"/>
</dbReference>
<dbReference type="PIR" id="S44881">
    <property type="entry name" value="S44881"/>
</dbReference>
<dbReference type="RefSeq" id="NP_498837.2">
    <property type="nucleotide sequence ID" value="NM_066436.5"/>
</dbReference>
<dbReference type="SMR" id="P34596"/>
<dbReference type="PaxDb" id="6239-ZC262.4"/>
<dbReference type="EnsemblMetazoa" id="ZC262.4.1">
    <property type="protein sequence ID" value="ZC262.4.1"/>
    <property type="gene ID" value="WBGene00022581"/>
</dbReference>
<dbReference type="EnsemblMetazoa" id="ZC262.4.2">
    <property type="protein sequence ID" value="ZC262.4.2"/>
    <property type="gene ID" value="WBGene00022581"/>
</dbReference>
<dbReference type="GeneID" id="191131"/>
<dbReference type="KEGG" id="cel:CELE_ZC262.4"/>
<dbReference type="UCSC" id="ZC262.4">
    <property type="organism name" value="c. elegans"/>
</dbReference>
<dbReference type="AGR" id="WB:WBGene00022581"/>
<dbReference type="CTD" id="191131"/>
<dbReference type="WormBase" id="ZC262.4">
    <property type="protein sequence ID" value="CE34443"/>
    <property type="gene ID" value="WBGene00022581"/>
</dbReference>
<dbReference type="HOGENOM" id="CLU_1751353_0_0_1"/>
<dbReference type="InParanoid" id="P34596"/>
<dbReference type="PRO" id="PR:P34596"/>
<dbReference type="Proteomes" id="UP000001940">
    <property type="component" value="Chromosome III"/>
</dbReference>
<dbReference type="Bgee" id="WBGene00022581">
    <property type="expression patterns" value="Expressed in embryo and 2 other cell types or tissues"/>
</dbReference>
<keyword id="KW-1185">Reference proteome</keyword>
<feature type="chain" id="PRO_0000065498" description="Uncharacterized protein ZC262.4">
    <location>
        <begin position="1"/>
        <end position="149"/>
    </location>
</feature>
<sequence>MNADKFVETTISDFMRLNSSRDFEYFVSIAKQLYSRGCRDYYTEAFLTHLKTIFPITEENAEKWLKYGEMLGTVGEKDFRTDIFEQMMKDFVDSNKLSQIAAKFHGFVESVDDWNLLAECLFSRVRALEHKINLTASAPMATDPSESSC</sequence>
<reference key="1">
    <citation type="journal article" date="1994" name="Nature">
        <title>2.2 Mb of contiguous nucleotide sequence from chromosome III of C. elegans.</title>
        <authorList>
            <person name="Wilson R."/>
            <person name="Ainscough R."/>
            <person name="Anderson K."/>
            <person name="Baynes C."/>
            <person name="Berks M."/>
            <person name="Bonfield J."/>
            <person name="Burton J."/>
            <person name="Connell M."/>
            <person name="Copsey T."/>
            <person name="Cooper J."/>
            <person name="Coulson A."/>
            <person name="Craxton M."/>
            <person name="Dear S."/>
            <person name="Du Z."/>
            <person name="Durbin R."/>
            <person name="Favello A."/>
            <person name="Fraser A."/>
            <person name="Fulton L."/>
            <person name="Gardner A."/>
            <person name="Green P."/>
            <person name="Hawkins T."/>
            <person name="Hillier L."/>
            <person name="Jier M."/>
            <person name="Johnston L."/>
            <person name="Jones M."/>
            <person name="Kershaw J."/>
            <person name="Kirsten J."/>
            <person name="Laisster N."/>
            <person name="Latreille P."/>
            <person name="Lightning J."/>
            <person name="Lloyd C."/>
            <person name="Mortimore B."/>
            <person name="O'Callaghan M."/>
            <person name="Parsons J."/>
            <person name="Percy C."/>
            <person name="Rifken L."/>
            <person name="Roopra A."/>
            <person name="Saunders D."/>
            <person name="Shownkeen R."/>
            <person name="Sims M."/>
            <person name="Smaldon N."/>
            <person name="Smith A."/>
            <person name="Smith M."/>
            <person name="Sonnhammer E."/>
            <person name="Staden R."/>
            <person name="Sulston J."/>
            <person name="Thierry-Mieg J."/>
            <person name="Thomas K."/>
            <person name="Vaudin M."/>
            <person name="Vaughan K."/>
            <person name="Waterston R."/>
            <person name="Watson A."/>
            <person name="Weinstock L."/>
            <person name="Wilkinson-Sproat J."/>
            <person name="Wohldman P."/>
        </authorList>
    </citation>
    <scope>NUCLEOTIDE SEQUENCE [LARGE SCALE GENOMIC DNA]</scope>
    <source>
        <strain>Bristol N2</strain>
    </source>
</reference>
<reference key="2">
    <citation type="journal article" date="1998" name="Science">
        <title>Genome sequence of the nematode C. elegans: a platform for investigating biology.</title>
        <authorList>
            <consortium name="The C. elegans sequencing consortium"/>
        </authorList>
    </citation>
    <scope>NUCLEOTIDE SEQUENCE [LARGE SCALE GENOMIC DNA]</scope>
    <source>
        <strain>Bristol N2</strain>
    </source>
</reference>
<organism>
    <name type="scientific">Caenorhabditis elegans</name>
    <dbReference type="NCBI Taxonomy" id="6239"/>
    <lineage>
        <taxon>Eukaryota</taxon>
        <taxon>Metazoa</taxon>
        <taxon>Ecdysozoa</taxon>
        <taxon>Nematoda</taxon>
        <taxon>Chromadorea</taxon>
        <taxon>Rhabditida</taxon>
        <taxon>Rhabditina</taxon>
        <taxon>Rhabditomorpha</taxon>
        <taxon>Rhabditoidea</taxon>
        <taxon>Rhabditidae</taxon>
        <taxon>Peloderinae</taxon>
        <taxon>Caenorhabditis</taxon>
    </lineage>
</organism>
<name>YOD4_CAEEL</name>